<dbReference type="EMBL" id="BT030553">
    <property type="protein sequence ID" value="ABQ12993.1"/>
    <property type="molecule type" value="mRNA"/>
</dbReference>
<dbReference type="EMBL" id="BC113254">
    <property type="protein sequence ID" value="AAI13255.1"/>
    <property type="molecule type" value="mRNA"/>
</dbReference>
<dbReference type="RefSeq" id="NP_001039873.1">
    <property type="nucleotide sequence ID" value="NM_001046408.1"/>
</dbReference>
<dbReference type="FunCoup" id="A5D9D4">
    <property type="interactions" value="2864"/>
</dbReference>
<dbReference type="STRING" id="9913.ENSBTAP00000037709"/>
<dbReference type="PaxDb" id="9913-ENSBTAP00000037709"/>
<dbReference type="Ensembl" id="ENSBTAT00000037887.6">
    <property type="protein sequence ID" value="ENSBTAP00000037709.4"/>
    <property type="gene ID" value="ENSBTAG00000026613.6"/>
</dbReference>
<dbReference type="GeneID" id="535567"/>
<dbReference type="KEGG" id="bta:535567"/>
<dbReference type="CTD" id="55154"/>
<dbReference type="VEuPathDB" id="HostDB:ENSBTAG00000026613"/>
<dbReference type="VGNC" id="VGNC:31710">
    <property type="gene designation" value="MSTO1"/>
</dbReference>
<dbReference type="eggNOG" id="KOG2530">
    <property type="taxonomic scope" value="Eukaryota"/>
</dbReference>
<dbReference type="GeneTree" id="ENSGT00530000064067"/>
<dbReference type="HOGENOM" id="CLU_022511_0_0_1"/>
<dbReference type="InParanoid" id="A5D9D4"/>
<dbReference type="OMA" id="RMAAYGC"/>
<dbReference type="OrthoDB" id="271881at2759"/>
<dbReference type="TreeFam" id="TF323669"/>
<dbReference type="Proteomes" id="UP000009136">
    <property type="component" value="Chromosome 3"/>
</dbReference>
<dbReference type="Bgee" id="ENSBTAG00000026613">
    <property type="expression patterns" value="Expressed in retina and 106 other cell types or tissues"/>
</dbReference>
<dbReference type="GO" id="GO:0005737">
    <property type="term" value="C:cytoplasm"/>
    <property type="evidence" value="ECO:0000318"/>
    <property type="project" value="GO_Central"/>
</dbReference>
<dbReference type="GO" id="GO:0005829">
    <property type="term" value="C:cytosol"/>
    <property type="evidence" value="ECO:0007669"/>
    <property type="project" value="Ensembl"/>
</dbReference>
<dbReference type="GO" id="GO:0005741">
    <property type="term" value="C:mitochondrial outer membrane"/>
    <property type="evidence" value="ECO:0000250"/>
    <property type="project" value="UniProtKB"/>
</dbReference>
<dbReference type="GO" id="GO:0005739">
    <property type="term" value="C:mitochondrion"/>
    <property type="evidence" value="ECO:0000318"/>
    <property type="project" value="GO_Central"/>
</dbReference>
<dbReference type="GO" id="GO:0048311">
    <property type="term" value="P:mitochondrion distribution"/>
    <property type="evidence" value="ECO:0000250"/>
    <property type="project" value="UniProtKB"/>
</dbReference>
<dbReference type="GO" id="GO:0007005">
    <property type="term" value="P:mitochondrion organization"/>
    <property type="evidence" value="ECO:0000250"/>
    <property type="project" value="UniProtKB"/>
</dbReference>
<dbReference type="GO" id="GO:0010636">
    <property type="term" value="P:positive regulation of mitochondrial fusion"/>
    <property type="evidence" value="ECO:0007669"/>
    <property type="project" value="Ensembl"/>
</dbReference>
<dbReference type="CDD" id="cd06060">
    <property type="entry name" value="misato"/>
    <property type="match status" value="1"/>
</dbReference>
<dbReference type="Gene3D" id="3.40.50.1440">
    <property type="entry name" value="Tubulin/FtsZ, GTPase domain"/>
    <property type="match status" value="1"/>
</dbReference>
<dbReference type="InterPro" id="IPR049942">
    <property type="entry name" value="DML1/Misato"/>
</dbReference>
<dbReference type="InterPro" id="IPR029209">
    <property type="entry name" value="DML1/Misato_tubulin"/>
</dbReference>
<dbReference type="InterPro" id="IPR019605">
    <property type="entry name" value="Misato_II_tubulin-like"/>
</dbReference>
<dbReference type="InterPro" id="IPR036525">
    <property type="entry name" value="Tubulin/FtsZ_GTPase_sf"/>
</dbReference>
<dbReference type="PANTHER" id="PTHR13391">
    <property type="entry name" value="MITOCHONDRIAL DISTRIBUTION REGULATOR MISATO"/>
    <property type="match status" value="1"/>
</dbReference>
<dbReference type="PANTHER" id="PTHR13391:SF0">
    <property type="entry name" value="PROTEIN MISATO HOMOLOG 1"/>
    <property type="match status" value="1"/>
</dbReference>
<dbReference type="Pfam" id="PF10644">
    <property type="entry name" value="Misat_Tub_SegII"/>
    <property type="match status" value="1"/>
</dbReference>
<dbReference type="Pfam" id="PF14881">
    <property type="entry name" value="Tubulin_3"/>
    <property type="match status" value="1"/>
</dbReference>
<dbReference type="SUPFAM" id="SSF52490">
    <property type="entry name" value="Tubulin nucleotide-binding domain-like"/>
    <property type="match status" value="1"/>
</dbReference>
<gene>
    <name type="primary">MSTO1</name>
</gene>
<evidence type="ECO:0000250" key="1">
    <source>
        <dbReference type="UniProtKB" id="Q9BUK6"/>
    </source>
</evidence>
<evidence type="ECO:0000305" key="2"/>
<sequence>MAGGAREVLTLQLGHFAGFVGAHWWNQQDAALCRPTDAKEPPGELCPDVLYRTGRTLHGQETYTPRLILMDLKGSLSSLKQEGGLYRDKQLDAAIAWQGKLTTHKEELYPKNPYLQDLLSAEGVLSSDGTWRVKSIPNGKGLPPFTNAITPKPVMPTEGSIRVWSDFLRVHLHPRSICMIHKYNHDGEAGRLEAFGQGESILKEPKYLEELEDRLHFYVEECDYLQGFQILCDLHDGFSGLGAKAAELLQDEYSGRGIITWGLLPGPYRLGELQKNIYRLLNTAFGLVHLSAHSSLVCPLSLGGSLGLRPEPPVSFPLLQYDATLPFHCGAILATALDTVTVPYRLRSSPVSMVHLADMLNFSGKKVVTAGATIPFPSVPSQSLPDTLMQLGEATPWTPLSACGDPSGTCCFAQSVVLRGLDRAHHTSQLAPGTPLPSPLHACATGEEVLAQYLQQQQPRVRSSSHLLLTPCKVVPPYPSLFSSSLSQHGSVLDGLPTGTAVESIPVLGALCSSSSLNRALGDLAKDLSKLDLRRWASFMDAGVEQDDLEETLQDLRSLAQCYEGGDDRLVD</sequence>
<accession>A5D9D4</accession>
<accession>Q29S12</accession>
<comment type="function">
    <text evidence="1">Involved in the regulation of mitochondrial distribution and morphology. Required for mitochondrial fusion and mitochondrial network formation.</text>
</comment>
<comment type="subcellular location">
    <subcellularLocation>
        <location evidence="1">Mitochondrion outer membrane</location>
    </subcellularLocation>
    <subcellularLocation>
        <location evidence="1">Cytoplasm</location>
    </subcellularLocation>
</comment>
<comment type="similarity">
    <text evidence="2">Belongs to the misato family.</text>
</comment>
<protein>
    <recommendedName>
        <fullName>Protein misato homolog 1</fullName>
    </recommendedName>
</protein>
<organism>
    <name type="scientific">Bos taurus</name>
    <name type="common">Bovine</name>
    <dbReference type="NCBI Taxonomy" id="9913"/>
    <lineage>
        <taxon>Eukaryota</taxon>
        <taxon>Metazoa</taxon>
        <taxon>Chordata</taxon>
        <taxon>Craniata</taxon>
        <taxon>Vertebrata</taxon>
        <taxon>Euteleostomi</taxon>
        <taxon>Mammalia</taxon>
        <taxon>Eutheria</taxon>
        <taxon>Laurasiatheria</taxon>
        <taxon>Artiodactyla</taxon>
        <taxon>Ruminantia</taxon>
        <taxon>Pecora</taxon>
        <taxon>Bovidae</taxon>
        <taxon>Bovinae</taxon>
        <taxon>Bos</taxon>
    </lineage>
</organism>
<keyword id="KW-0963">Cytoplasm</keyword>
<keyword id="KW-0472">Membrane</keyword>
<keyword id="KW-0496">Mitochondrion</keyword>
<keyword id="KW-1000">Mitochondrion outer membrane</keyword>
<keyword id="KW-1185">Reference proteome</keyword>
<reference key="1">
    <citation type="journal article" date="2005" name="BMC Genomics">
        <title>Characterization of 954 bovine full-CDS cDNA sequences.</title>
        <authorList>
            <person name="Harhay G.P."/>
            <person name="Sonstegard T.S."/>
            <person name="Keele J.W."/>
            <person name="Heaton M.P."/>
            <person name="Clawson M.L."/>
            <person name="Snelling W.M."/>
            <person name="Wiedmann R.T."/>
            <person name="Van Tassell C.P."/>
            <person name="Smith T.P.L."/>
        </authorList>
    </citation>
    <scope>NUCLEOTIDE SEQUENCE [LARGE SCALE MRNA]</scope>
</reference>
<reference key="2">
    <citation type="submission" date="2006-02" db="EMBL/GenBank/DDBJ databases">
        <authorList>
            <consortium name="NIH - Mammalian Gene Collection (MGC) project"/>
        </authorList>
    </citation>
    <scope>NUCLEOTIDE SEQUENCE [LARGE SCALE MRNA]</scope>
    <source>
        <strain>Hereford</strain>
        <tissue>Uterus</tissue>
    </source>
</reference>
<proteinExistence type="evidence at transcript level"/>
<name>MSTO1_BOVIN</name>
<feature type="chain" id="PRO_0000304625" description="Protein misato homolog 1">
    <location>
        <begin position="1"/>
        <end position="572"/>
    </location>
</feature>
<feature type="sequence conflict" description="In Ref. 1; ABQ12993." evidence="2" ref="1">
    <original>T</original>
    <variation>I</variation>
    <location>
        <position position="130"/>
    </location>
</feature>